<feature type="chain" id="PRO_1000047657" description="Aminomethyltransferase">
    <location>
        <begin position="1"/>
        <end position="370"/>
    </location>
</feature>
<dbReference type="EC" id="2.1.2.10" evidence="1"/>
<dbReference type="EMBL" id="CP000726">
    <property type="protein sequence ID" value="ABS34360.1"/>
    <property type="molecule type" value="Genomic_DNA"/>
</dbReference>
<dbReference type="RefSeq" id="WP_011986167.1">
    <property type="nucleotide sequence ID" value="NC_009697.1"/>
</dbReference>
<dbReference type="SMR" id="A7FRV3"/>
<dbReference type="GeneID" id="5184951"/>
<dbReference type="KEGG" id="cba:CLB_0735"/>
<dbReference type="HOGENOM" id="CLU_007884_10_2_9"/>
<dbReference type="GO" id="GO:0005829">
    <property type="term" value="C:cytosol"/>
    <property type="evidence" value="ECO:0007669"/>
    <property type="project" value="TreeGrafter"/>
</dbReference>
<dbReference type="GO" id="GO:0005960">
    <property type="term" value="C:glycine cleavage complex"/>
    <property type="evidence" value="ECO:0007669"/>
    <property type="project" value="InterPro"/>
</dbReference>
<dbReference type="GO" id="GO:0004047">
    <property type="term" value="F:aminomethyltransferase activity"/>
    <property type="evidence" value="ECO:0007669"/>
    <property type="project" value="UniProtKB-UniRule"/>
</dbReference>
<dbReference type="GO" id="GO:0008483">
    <property type="term" value="F:transaminase activity"/>
    <property type="evidence" value="ECO:0007669"/>
    <property type="project" value="UniProtKB-KW"/>
</dbReference>
<dbReference type="GO" id="GO:0019464">
    <property type="term" value="P:glycine decarboxylation via glycine cleavage system"/>
    <property type="evidence" value="ECO:0007669"/>
    <property type="project" value="UniProtKB-UniRule"/>
</dbReference>
<dbReference type="FunFam" id="2.40.30.110:FF:000014">
    <property type="entry name" value="Aminomethyltransferase"/>
    <property type="match status" value="1"/>
</dbReference>
<dbReference type="FunFam" id="3.30.70.1400:FF:000001">
    <property type="entry name" value="Aminomethyltransferase"/>
    <property type="match status" value="1"/>
</dbReference>
<dbReference type="FunFam" id="4.10.1250.10:FF:000001">
    <property type="entry name" value="Aminomethyltransferase"/>
    <property type="match status" value="1"/>
</dbReference>
<dbReference type="Gene3D" id="2.40.30.110">
    <property type="entry name" value="Aminomethyltransferase beta-barrel domains"/>
    <property type="match status" value="1"/>
</dbReference>
<dbReference type="Gene3D" id="3.30.70.1400">
    <property type="entry name" value="Aminomethyltransferase beta-barrel domains"/>
    <property type="match status" value="1"/>
</dbReference>
<dbReference type="Gene3D" id="4.10.1250.10">
    <property type="entry name" value="Aminomethyltransferase fragment"/>
    <property type="match status" value="1"/>
</dbReference>
<dbReference type="Gene3D" id="3.30.1360.120">
    <property type="entry name" value="Probable tRNA modification gtpase trme, domain 1"/>
    <property type="match status" value="1"/>
</dbReference>
<dbReference type="HAMAP" id="MF_00259">
    <property type="entry name" value="GcvT"/>
    <property type="match status" value="1"/>
</dbReference>
<dbReference type="InterPro" id="IPR006223">
    <property type="entry name" value="GCS_T"/>
</dbReference>
<dbReference type="InterPro" id="IPR022903">
    <property type="entry name" value="GCS_T_bac"/>
</dbReference>
<dbReference type="InterPro" id="IPR013977">
    <property type="entry name" value="GCST_C"/>
</dbReference>
<dbReference type="InterPro" id="IPR006222">
    <property type="entry name" value="GCV_T_N"/>
</dbReference>
<dbReference type="InterPro" id="IPR028896">
    <property type="entry name" value="GcvT/YgfZ/DmdA"/>
</dbReference>
<dbReference type="InterPro" id="IPR029043">
    <property type="entry name" value="GcvT/YgfZ_C"/>
</dbReference>
<dbReference type="InterPro" id="IPR027266">
    <property type="entry name" value="TrmE/GcvT_dom1"/>
</dbReference>
<dbReference type="NCBIfam" id="TIGR00528">
    <property type="entry name" value="gcvT"/>
    <property type="match status" value="1"/>
</dbReference>
<dbReference type="NCBIfam" id="NF001567">
    <property type="entry name" value="PRK00389.1"/>
    <property type="match status" value="1"/>
</dbReference>
<dbReference type="PANTHER" id="PTHR43757">
    <property type="entry name" value="AMINOMETHYLTRANSFERASE"/>
    <property type="match status" value="1"/>
</dbReference>
<dbReference type="PANTHER" id="PTHR43757:SF2">
    <property type="entry name" value="AMINOMETHYLTRANSFERASE, MITOCHONDRIAL"/>
    <property type="match status" value="1"/>
</dbReference>
<dbReference type="Pfam" id="PF01571">
    <property type="entry name" value="GCV_T"/>
    <property type="match status" value="1"/>
</dbReference>
<dbReference type="Pfam" id="PF08669">
    <property type="entry name" value="GCV_T_C"/>
    <property type="match status" value="1"/>
</dbReference>
<dbReference type="PIRSF" id="PIRSF006487">
    <property type="entry name" value="GcvT"/>
    <property type="match status" value="1"/>
</dbReference>
<dbReference type="SUPFAM" id="SSF101790">
    <property type="entry name" value="Aminomethyltransferase beta-barrel domain"/>
    <property type="match status" value="1"/>
</dbReference>
<dbReference type="SUPFAM" id="SSF103025">
    <property type="entry name" value="Folate-binding domain"/>
    <property type="match status" value="1"/>
</dbReference>
<gene>
    <name evidence="1" type="primary">gcvT</name>
    <name type="ordered locus">CLB_0735</name>
</gene>
<name>GCST_CLOB1</name>
<protein>
    <recommendedName>
        <fullName evidence="1">Aminomethyltransferase</fullName>
        <ecNumber evidence="1">2.1.2.10</ecNumber>
    </recommendedName>
    <alternativeName>
        <fullName evidence="1">Glycine cleavage system T protein</fullName>
    </alternativeName>
</protein>
<proteinExistence type="inferred from homology"/>
<evidence type="ECO:0000255" key="1">
    <source>
        <dbReference type="HAMAP-Rule" id="MF_00259"/>
    </source>
</evidence>
<reference key="1">
    <citation type="journal article" date="2007" name="PLoS ONE">
        <title>Analysis of the neurotoxin complex genes in Clostridium botulinum A1-A4 and B1 strains: BoNT/A3, /Ba4 and /B1 clusters are located within plasmids.</title>
        <authorList>
            <person name="Smith T.J."/>
            <person name="Hill K.K."/>
            <person name="Foley B.T."/>
            <person name="Detter J.C."/>
            <person name="Munk A.C."/>
            <person name="Bruce D.C."/>
            <person name="Doggett N.A."/>
            <person name="Smith L.A."/>
            <person name="Marks J.D."/>
            <person name="Xie G."/>
            <person name="Brettin T.S."/>
        </authorList>
    </citation>
    <scope>NUCLEOTIDE SEQUENCE [LARGE SCALE GENOMIC DNA]</scope>
    <source>
        <strain>ATCC 19397 / Type A</strain>
    </source>
</reference>
<comment type="function">
    <text evidence="1">The glycine cleavage system catalyzes the degradation of glycine.</text>
</comment>
<comment type="catalytic activity">
    <reaction evidence="1">
        <text>N(6)-[(R)-S(8)-aminomethyldihydrolipoyl]-L-lysyl-[protein] + (6S)-5,6,7,8-tetrahydrofolate = N(6)-[(R)-dihydrolipoyl]-L-lysyl-[protein] + (6R)-5,10-methylene-5,6,7,8-tetrahydrofolate + NH4(+)</text>
        <dbReference type="Rhea" id="RHEA:16945"/>
        <dbReference type="Rhea" id="RHEA-COMP:10475"/>
        <dbReference type="Rhea" id="RHEA-COMP:10492"/>
        <dbReference type="ChEBI" id="CHEBI:15636"/>
        <dbReference type="ChEBI" id="CHEBI:28938"/>
        <dbReference type="ChEBI" id="CHEBI:57453"/>
        <dbReference type="ChEBI" id="CHEBI:83100"/>
        <dbReference type="ChEBI" id="CHEBI:83143"/>
        <dbReference type="EC" id="2.1.2.10"/>
    </reaction>
</comment>
<comment type="subunit">
    <text evidence="1">The glycine cleavage system is composed of four proteins: P, T, L and H.</text>
</comment>
<comment type="similarity">
    <text evidence="1">Belongs to the GcvT family.</text>
</comment>
<keyword id="KW-0032">Aminotransferase</keyword>
<keyword id="KW-0808">Transferase</keyword>
<organism>
    <name type="scientific">Clostridium botulinum (strain ATCC 19397 / Type A)</name>
    <dbReference type="NCBI Taxonomy" id="441770"/>
    <lineage>
        <taxon>Bacteria</taxon>
        <taxon>Bacillati</taxon>
        <taxon>Bacillota</taxon>
        <taxon>Clostridia</taxon>
        <taxon>Eubacteriales</taxon>
        <taxon>Clostridiaceae</taxon>
        <taxon>Clostridium</taxon>
    </lineage>
</organism>
<sequence length="370" mass="41629">MKDLKVTPLRGVYEEYGGKIVDFAGYELPTQFKGFLHEHHTVREKAGLFDVSHMGEAMVTGKDAGKFIQYLMTNDINVLKDNEVLYTFMCNEDGGVIDDLLVYKFAEDEFFLVINASNKDKDVKWIMDHKGDFDVEIVDVSDSIAQLAFQGPLAEEILQKIVDVDLQEIKFFKLKRDVLVNGKKCLVSRTGYTGEDGFEIYCKPEDAKGLWHAILNAGKEEGAQPIGLGARDTLRFEASLLLYGNEMDETITPLEVGMGFFAKLKIEEDFIGKDALIKQKAEGVTRKLVGFELLDKGIPRHGYEVIKDGKVIGHVTTGYKSPTLNKAIGLALVEEQYSKIGTEFNIKVRKKELKAVAIDKRFYTKKTKTK</sequence>
<accession>A7FRV3</accession>